<evidence type="ECO:0000250" key="1"/>
<evidence type="ECO:0000255" key="2"/>
<evidence type="ECO:0000269" key="3">
    <source>
    </source>
</evidence>
<evidence type="ECO:0000303" key="4">
    <source>
    </source>
</evidence>
<evidence type="ECO:0000303" key="5">
    <source ref="1"/>
</evidence>
<evidence type="ECO:0000305" key="6"/>
<proteinExistence type="evidence at transcript level"/>
<sequence length="370" mass="40468">MANKLIGEMGLHTKISNIFAARNIITAKDALSMTEFELMELLDVGMKEIRSAISFISEATSPPCQSARSLLEKKVENEHLSGHLPTHLKGLDDTLCGGIPFGVLTELVGPPGIGKSQFCMKLALSASFPVAYGGLDGRVIYIDVESKFSSRRVIEMGLESFPEVFHLKGMAQEMAGRILVLRPTSLANFTESIQELKNSILQNQVKLLVIDSMTALLSGENKPGAQRQPQLGWHISFLKSLAEFSRIPIVVTNQVRSQNRDETSQYSFQAKVKDEFKDNTKTYDSHLVAALGINWAHAVTIRLVLEAKSGQRIIKVAKSPMSPPLAFPFHITSAGISLLSDNGTELKGPGINTIHARGHSDMINFHGDCS</sequence>
<keyword id="KW-0025">Alternative splicing</keyword>
<keyword id="KW-0067">ATP-binding</keyword>
<keyword id="KW-0227">DNA damage</keyword>
<keyword id="KW-0233">DNA recombination</keyword>
<keyword id="KW-0234">DNA repair</keyword>
<keyword id="KW-0238">DNA-binding</keyword>
<keyword id="KW-0547">Nucleotide-binding</keyword>
<keyword id="KW-0539">Nucleus</keyword>
<keyword id="KW-1185">Reference proteome</keyword>
<protein>
    <recommendedName>
        <fullName>DNA repair protein RAD51 homolog 2</fullName>
        <shortName>AtRAD51B</shortName>
    </recommendedName>
</protein>
<name>RA51B_ARATH</name>
<comment type="function">
    <text evidence="1">May be involved in the homologous recombination repair (HRR) pathway of double-stranded DNA breaks arising during DNA replication or induced by DNA-damaging agents.</text>
</comment>
<comment type="subcellular location">
    <subcellularLocation>
        <location evidence="1">Nucleus</location>
    </subcellularLocation>
</comment>
<comment type="alternative products">
    <event type="alternative splicing"/>
    <isoform>
        <id>Q9SK02-1</id>
        <name>1</name>
        <name>RAD51Balpha</name>
        <sequence type="displayed"/>
    </isoform>
    <isoform>
        <id>Q9SK02-2</id>
        <name>2</name>
        <name>RAD51Bbeta</name>
        <sequence type="described" ref="VSP_016462 VSP_016463 VSP_016464"/>
    </isoform>
    <isoform>
        <id>Q9SK02-3</id>
        <name>3</name>
        <name>RAD51Bbeta</name>
        <sequence type="described" ref="VSP_016465"/>
    </isoform>
</comment>
<comment type="tissue specificity">
    <text evidence="3">Preferentially expressed in flower buds and roots.</text>
</comment>
<comment type="induction">
    <text evidence="3">Induced by ionizing irradiation and treatment with a cross-linking reagent, cisplatin.</text>
</comment>
<comment type="miscellaneous">
    <molecule>Isoform 3</molecule>
    <text evidence="6">May be due to an intron retention.</text>
</comment>
<comment type="similarity">
    <text evidence="6">Belongs to the RecA family. RAD51 subfamily.</text>
</comment>
<comment type="sequence caution" evidence="6">
    <conflict type="erroneous gene model prediction">
        <sequence resource="EMBL-CDS" id="AAD21490"/>
    </conflict>
</comment>
<comment type="sequence caution" evidence="6">
    <conflict type="frameshift">
        <sequence resource="EMBL-CDS" id="CAD70704"/>
    </conflict>
</comment>
<gene>
    <name type="primary">RAD51B</name>
    <name type="ordered locus">At2g28560</name>
    <name type="ORF">T17D12.12</name>
</gene>
<reference key="1">
    <citation type="submission" date="2003-03" db="EMBL/GenBank/DDBJ databases">
        <title>A study of RAD51 homologues from Arabidopsis.</title>
        <authorList>
            <person name="Siaud N."/>
        </authorList>
    </citation>
    <scope>NUCLEOTIDE SEQUENCE [MRNA] (ISOFORM 3)</scope>
    <source>
        <strain>cv. Columbia</strain>
    </source>
</reference>
<reference key="2">
    <citation type="journal article" date="2005" name="Plant Mol. Biol.">
        <title>Arabidopsis Rad51B is important for double-strand DNA breaks repair in somatic cells.</title>
        <authorList>
            <person name="Osakabe K."/>
            <person name="Abe K."/>
            <person name="Yamanouchi H."/>
            <person name="Takyuu T."/>
            <person name="Yoshioka T."/>
            <person name="Ito Y."/>
            <person name="Kato T."/>
            <person name="Tabata S."/>
            <person name="Kurei S."/>
            <person name="Yoshioka Y."/>
            <person name="Machida Y."/>
            <person name="Seki M."/>
            <person name="Kobayashi M."/>
            <person name="Shinozaki K."/>
            <person name="Ichikawa H."/>
            <person name="Toki S."/>
        </authorList>
    </citation>
    <scope>NUCLEOTIDE SEQUENCE [MRNA] (ISOFORMS 1 AND 2)</scope>
    <scope>TISSUE SPECIFICITY</scope>
    <scope>INDUCTION</scope>
    <source>
        <strain>cv. Columbia</strain>
        <tissue>Flower bud</tissue>
    </source>
</reference>
<reference key="3">
    <citation type="journal article" date="1999" name="Nature">
        <title>Sequence and analysis of chromosome 2 of the plant Arabidopsis thaliana.</title>
        <authorList>
            <person name="Lin X."/>
            <person name="Kaul S."/>
            <person name="Rounsley S.D."/>
            <person name="Shea T.P."/>
            <person name="Benito M.-I."/>
            <person name="Town C.D."/>
            <person name="Fujii C.Y."/>
            <person name="Mason T.M."/>
            <person name="Bowman C.L."/>
            <person name="Barnstead M.E."/>
            <person name="Feldblyum T.V."/>
            <person name="Buell C.R."/>
            <person name="Ketchum K.A."/>
            <person name="Lee J.J."/>
            <person name="Ronning C.M."/>
            <person name="Koo H.L."/>
            <person name="Moffat K.S."/>
            <person name="Cronin L.A."/>
            <person name="Shen M."/>
            <person name="Pai G."/>
            <person name="Van Aken S."/>
            <person name="Umayam L."/>
            <person name="Tallon L.J."/>
            <person name="Gill J.E."/>
            <person name="Adams M.D."/>
            <person name="Carrera A.J."/>
            <person name="Creasy T.H."/>
            <person name="Goodman H.M."/>
            <person name="Somerville C.R."/>
            <person name="Copenhaver G.P."/>
            <person name="Preuss D."/>
            <person name="Nierman W.C."/>
            <person name="White O."/>
            <person name="Eisen J.A."/>
            <person name="Salzberg S.L."/>
            <person name="Fraser C.M."/>
            <person name="Venter J.C."/>
        </authorList>
    </citation>
    <scope>NUCLEOTIDE SEQUENCE [LARGE SCALE GENOMIC DNA]</scope>
    <source>
        <strain>cv. Columbia</strain>
    </source>
</reference>
<reference key="4">
    <citation type="journal article" date="2017" name="Plant J.">
        <title>Araport11: a complete reannotation of the Arabidopsis thaliana reference genome.</title>
        <authorList>
            <person name="Cheng C.Y."/>
            <person name="Krishnakumar V."/>
            <person name="Chan A.P."/>
            <person name="Thibaud-Nissen F."/>
            <person name="Schobel S."/>
            <person name="Town C.D."/>
        </authorList>
    </citation>
    <scope>GENOME REANNOTATION</scope>
    <source>
        <strain>cv. Columbia</strain>
    </source>
</reference>
<feature type="chain" id="PRO_0000122944" description="DNA repair protein RAD51 homolog 2">
    <location>
        <begin position="1"/>
        <end position="370"/>
    </location>
</feature>
<feature type="binding site" evidence="2">
    <location>
        <begin position="109"/>
        <end position="116"/>
    </location>
    <ligand>
        <name>ATP</name>
        <dbReference type="ChEBI" id="CHEBI:30616"/>
    </ligand>
</feature>
<feature type="splice variant" id="VSP_016462" description="In isoform 2." evidence="4">
    <location>
        <begin position="1"/>
        <end position="32"/>
    </location>
</feature>
<feature type="splice variant" id="VSP_016463" description="In isoform 2." evidence="4">
    <original>AKVKDE</original>
    <variation>DFLCNS</variation>
    <location>
        <begin position="270"/>
        <end position="275"/>
    </location>
</feature>
<feature type="splice variant" id="VSP_016464" description="In isoform 2." evidence="4">
    <location>
        <begin position="276"/>
        <end position="370"/>
    </location>
</feature>
<feature type="splice variant" id="VSP_016465" description="In isoform 3." evidence="5">
    <original>HSDMINFHGDCS</original>
    <variation>IVDPDYVALFRTF</variation>
    <location>
        <begin position="359"/>
        <end position="370"/>
    </location>
</feature>
<feature type="sequence conflict" description="In Ref. 1; CAD70704." evidence="6" ref="1">
    <original>H</original>
    <variation>Q</variation>
    <location>
        <position position="330"/>
    </location>
</feature>
<feature type="sequence conflict" description="In Ref. 1; CAD70704." evidence="6" ref="1">
    <original>T</original>
    <variation>P</variation>
    <location>
        <position position="353"/>
    </location>
</feature>
<feature type="sequence conflict" description="In Ref. 1; CAD70704." evidence="6" ref="1">
    <original>PDY</original>
    <variation>FKD</variation>
    <location sequence="Q9SK02-3">
        <begin position="362"/>
        <end position="364"/>
    </location>
</feature>
<organism>
    <name type="scientific">Arabidopsis thaliana</name>
    <name type="common">Mouse-ear cress</name>
    <dbReference type="NCBI Taxonomy" id="3702"/>
    <lineage>
        <taxon>Eukaryota</taxon>
        <taxon>Viridiplantae</taxon>
        <taxon>Streptophyta</taxon>
        <taxon>Embryophyta</taxon>
        <taxon>Tracheophyta</taxon>
        <taxon>Spermatophyta</taxon>
        <taxon>Magnoliopsida</taxon>
        <taxon>eudicotyledons</taxon>
        <taxon>Gunneridae</taxon>
        <taxon>Pentapetalae</taxon>
        <taxon>rosids</taxon>
        <taxon>malvids</taxon>
        <taxon>Brassicales</taxon>
        <taxon>Brassicaceae</taxon>
        <taxon>Camelineae</taxon>
        <taxon>Arabidopsis</taxon>
    </lineage>
</organism>
<dbReference type="EMBL" id="AJ549435">
    <property type="protein sequence ID" value="CAD70704.1"/>
    <property type="status" value="ALT_FRAME"/>
    <property type="molecule type" value="mRNA"/>
</dbReference>
<dbReference type="EMBL" id="AB194809">
    <property type="protein sequence ID" value="BAD89163.1"/>
    <property type="molecule type" value="mRNA"/>
</dbReference>
<dbReference type="EMBL" id="AB194810">
    <property type="protein sequence ID" value="BAD89164.1"/>
    <property type="molecule type" value="mRNA"/>
</dbReference>
<dbReference type="EMBL" id="AC006587">
    <property type="protein sequence ID" value="AAD21490.1"/>
    <property type="status" value="ALT_SEQ"/>
    <property type="molecule type" value="Genomic_DNA"/>
</dbReference>
<dbReference type="EMBL" id="CP002685">
    <property type="protein sequence ID" value="AEC08140.1"/>
    <property type="molecule type" value="Genomic_DNA"/>
</dbReference>
<dbReference type="EMBL" id="CP002685">
    <property type="protein sequence ID" value="AEC08141.1"/>
    <property type="molecule type" value="Genomic_DNA"/>
</dbReference>
<dbReference type="EMBL" id="CP002685">
    <property type="protein sequence ID" value="AEC08143.1"/>
    <property type="molecule type" value="Genomic_DNA"/>
</dbReference>
<dbReference type="EMBL" id="CP002685">
    <property type="protein sequence ID" value="ANM61239.1"/>
    <property type="molecule type" value="Genomic_DNA"/>
</dbReference>
<dbReference type="EMBL" id="CP002685">
    <property type="protein sequence ID" value="ANM61240.1"/>
    <property type="molecule type" value="Genomic_DNA"/>
</dbReference>
<dbReference type="PIR" id="D84686">
    <property type="entry name" value="D84686"/>
</dbReference>
<dbReference type="RefSeq" id="NP_001031438.1">
    <molecule id="Q9SK02-1"/>
    <property type="nucleotide sequence ID" value="NM_001036361.2"/>
</dbReference>
<dbReference type="RefSeq" id="NP_001154538.1">
    <molecule id="Q9SK02-2"/>
    <property type="nucleotide sequence ID" value="NM_001161066.1"/>
</dbReference>
<dbReference type="RefSeq" id="NP_001323469.1">
    <molecule id="Q9SK02-1"/>
    <property type="nucleotide sequence ID" value="NM_001336173.1"/>
</dbReference>
<dbReference type="RefSeq" id="NP_001323470.1">
    <molecule id="Q9SK02-1"/>
    <property type="nucleotide sequence ID" value="NM_001336172.1"/>
</dbReference>
<dbReference type="RefSeq" id="NP_180423.3">
    <molecule id="Q9SK02-3"/>
    <property type="nucleotide sequence ID" value="NM_128416.4"/>
</dbReference>
<dbReference type="SMR" id="Q9SK02"/>
<dbReference type="BioGRID" id="2754">
    <property type="interactions" value="1"/>
</dbReference>
<dbReference type="FunCoup" id="Q9SK02">
    <property type="interactions" value="196"/>
</dbReference>
<dbReference type="STRING" id="3702.Q9SK02"/>
<dbReference type="PaxDb" id="3702-AT2G28560.1"/>
<dbReference type="EnsemblPlants" id="AT2G28560.1">
    <molecule id="Q9SK02-3"/>
    <property type="protein sequence ID" value="AT2G28560.1"/>
    <property type="gene ID" value="AT2G28560"/>
</dbReference>
<dbReference type="EnsemblPlants" id="AT2G28560.2">
    <molecule id="Q9SK02-1"/>
    <property type="protein sequence ID" value="AT2G28560.2"/>
    <property type="gene ID" value="AT2G28560"/>
</dbReference>
<dbReference type="EnsemblPlants" id="AT2G28560.4">
    <molecule id="Q9SK02-2"/>
    <property type="protein sequence ID" value="AT2G28560.4"/>
    <property type="gene ID" value="AT2G28560"/>
</dbReference>
<dbReference type="EnsemblPlants" id="AT2G28560.5">
    <molecule id="Q9SK02-1"/>
    <property type="protein sequence ID" value="AT2G28560.5"/>
    <property type="gene ID" value="AT2G28560"/>
</dbReference>
<dbReference type="EnsemblPlants" id="AT2G28560.6">
    <molecule id="Q9SK02-1"/>
    <property type="protein sequence ID" value="AT2G28560.6"/>
    <property type="gene ID" value="AT2G28560"/>
</dbReference>
<dbReference type="GeneID" id="817404"/>
<dbReference type="Gramene" id="AT2G28560.1">
    <molecule id="Q9SK02-3"/>
    <property type="protein sequence ID" value="AT2G28560.1"/>
    <property type="gene ID" value="AT2G28560"/>
</dbReference>
<dbReference type="Gramene" id="AT2G28560.2">
    <molecule id="Q9SK02-1"/>
    <property type="protein sequence ID" value="AT2G28560.2"/>
    <property type="gene ID" value="AT2G28560"/>
</dbReference>
<dbReference type="Gramene" id="AT2G28560.4">
    <molecule id="Q9SK02-2"/>
    <property type="protein sequence ID" value="AT2G28560.4"/>
    <property type="gene ID" value="AT2G28560"/>
</dbReference>
<dbReference type="Gramene" id="AT2G28560.5">
    <molecule id="Q9SK02-1"/>
    <property type="protein sequence ID" value="AT2G28560.5"/>
    <property type="gene ID" value="AT2G28560"/>
</dbReference>
<dbReference type="Gramene" id="AT2G28560.6">
    <molecule id="Q9SK02-1"/>
    <property type="protein sequence ID" value="AT2G28560.6"/>
    <property type="gene ID" value="AT2G28560"/>
</dbReference>
<dbReference type="KEGG" id="ath:AT2G28560"/>
<dbReference type="Araport" id="AT2G28560"/>
<dbReference type="TAIR" id="AT2G28560">
    <property type="gene designation" value="RAD51B"/>
</dbReference>
<dbReference type="eggNOG" id="KOG1433">
    <property type="taxonomic scope" value="Eukaryota"/>
</dbReference>
<dbReference type="InParanoid" id="Q9SK02"/>
<dbReference type="OrthoDB" id="5957327at2759"/>
<dbReference type="PhylomeDB" id="Q9SK02"/>
<dbReference type="PRO" id="PR:Q9SK02"/>
<dbReference type="Proteomes" id="UP000006548">
    <property type="component" value="Chromosome 2"/>
</dbReference>
<dbReference type="ExpressionAtlas" id="Q9SK02">
    <property type="expression patterns" value="baseline and differential"/>
</dbReference>
<dbReference type="GO" id="GO:0033063">
    <property type="term" value="C:Rad51B-Rad51C-Rad51D-XRCC2 complex"/>
    <property type="evidence" value="ECO:0007669"/>
    <property type="project" value="InterPro"/>
</dbReference>
<dbReference type="GO" id="GO:0005524">
    <property type="term" value="F:ATP binding"/>
    <property type="evidence" value="ECO:0007669"/>
    <property type="project" value="UniProtKB-KW"/>
</dbReference>
<dbReference type="GO" id="GO:0016887">
    <property type="term" value="F:ATP hydrolysis activity"/>
    <property type="evidence" value="ECO:0007669"/>
    <property type="project" value="InterPro"/>
</dbReference>
<dbReference type="GO" id="GO:0140664">
    <property type="term" value="F:ATP-dependent DNA damage sensor activity"/>
    <property type="evidence" value="ECO:0007669"/>
    <property type="project" value="InterPro"/>
</dbReference>
<dbReference type="GO" id="GO:0003677">
    <property type="term" value="F:DNA binding"/>
    <property type="evidence" value="ECO:0007669"/>
    <property type="project" value="UniProtKB-KW"/>
</dbReference>
<dbReference type="GO" id="GO:0000150">
    <property type="term" value="F:DNA strand exchange activity"/>
    <property type="evidence" value="ECO:0000250"/>
    <property type="project" value="TAIR"/>
</dbReference>
<dbReference type="GO" id="GO:0006281">
    <property type="term" value="P:DNA repair"/>
    <property type="evidence" value="ECO:0000315"/>
    <property type="project" value="TAIR"/>
</dbReference>
<dbReference type="GO" id="GO:0000724">
    <property type="term" value="P:double-strand break repair via homologous recombination"/>
    <property type="evidence" value="ECO:0007669"/>
    <property type="project" value="InterPro"/>
</dbReference>
<dbReference type="CDD" id="cd19493">
    <property type="entry name" value="Rad51B"/>
    <property type="match status" value="1"/>
</dbReference>
<dbReference type="FunFam" id="3.40.50.300:FF:001643">
    <property type="entry name" value="DNA repair protein RAD51 homolog 2"/>
    <property type="match status" value="1"/>
</dbReference>
<dbReference type="Gene3D" id="3.40.50.300">
    <property type="entry name" value="P-loop containing nucleotide triphosphate hydrolases"/>
    <property type="match status" value="1"/>
</dbReference>
<dbReference type="InterPro" id="IPR003593">
    <property type="entry name" value="AAA+_ATPase"/>
</dbReference>
<dbReference type="InterPro" id="IPR013632">
    <property type="entry name" value="DNA_recomb/repair_Rad51_C"/>
</dbReference>
<dbReference type="InterPro" id="IPR016467">
    <property type="entry name" value="DNA_recomb/repair_RecA-like"/>
</dbReference>
<dbReference type="InterPro" id="IPR027417">
    <property type="entry name" value="P-loop_NTPase"/>
</dbReference>
<dbReference type="InterPro" id="IPR030548">
    <property type="entry name" value="RAD51B"/>
</dbReference>
<dbReference type="InterPro" id="IPR020588">
    <property type="entry name" value="RecA_ATP-bd"/>
</dbReference>
<dbReference type="PANTHER" id="PTHR46456">
    <property type="entry name" value="DNA REPAIR PROTEIN RAD51 HOMOLOG 2"/>
    <property type="match status" value="1"/>
</dbReference>
<dbReference type="PANTHER" id="PTHR46456:SF1">
    <property type="entry name" value="DNA REPAIR PROTEIN RAD51 HOMOLOG 2"/>
    <property type="match status" value="1"/>
</dbReference>
<dbReference type="Pfam" id="PF08423">
    <property type="entry name" value="Rad51"/>
    <property type="match status" value="1"/>
</dbReference>
<dbReference type="PIRSF" id="PIRSF005856">
    <property type="entry name" value="Rad51"/>
    <property type="match status" value="1"/>
</dbReference>
<dbReference type="SMART" id="SM00382">
    <property type="entry name" value="AAA"/>
    <property type="match status" value="1"/>
</dbReference>
<dbReference type="SUPFAM" id="SSF47789">
    <property type="entry name" value="C-terminal domain of RNA polymerase alpha subunit"/>
    <property type="match status" value="1"/>
</dbReference>
<dbReference type="SUPFAM" id="SSF52540">
    <property type="entry name" value="P-loop containing nucleoside triphosphate hydrolases"/>
    <property type="match status" value="1"/>
</dbReference>
<dbReference type="PROSITE" id="PS50162">
    <property type="entry name" value="RECA_2"/>
    <property type="match status" value="1"/>
</dbReference>
<accession>Q9SK02</accession>
<accession>Q5H793</accession>
<accession>Q5H794</accession>
<accession>Q5K4Q0</accession>